<evidence type="ECO:0000250" key="1"/>
<evidence type="ECO:0000305" key="2"/>
<comment type="function">
    <text evidence="1">Catalyzes the final step of sucrose synthesis.</text>
</comment>
<comment type="catalytic activity">
    <reaction>
        <text>sucrose 6(F)-phosphate + H2O = sucrose + phosphate</text>
        <dbReference type="Rhea" id="RHEA:19289"/>
        <dbReference type="ChEBI" id="CHEBI:15377"/>
        <dbReference type="ChEBI" id="CHEBI:17992"/>
        <dbReference type="ChEBI" id="CHEBI:43474"/>
        <dbReference type="ChEBI" id="CHEBI:57723"/>
        <dbReference type="EC" id="3.1.3.24"/>
    </reaction>
</comment>
<comment type="cofactor">
    <cofactor evidence="1">
        <name>Mg(2+)</name>
        <dbReference type="ChEBI" id="CHEBI:18420"/>
    </cofactor>
</comment>
<comment type="pathway">
    <text>Glycan biosynthesis; sucrose biosynthesis; sucrose from D-fructose 6-phosphate and UDP-alpha-D-glucose: step 2/2.</text>
</comment>
<comment type="subunit">
    <text evidence="1">Homodimer.</text>
</comment>
<comment type="similarity">
    <text evidence="2">Belongs to the sucrose phosphatase family.</text>
</comment>
<comment type="sequence caution" evidence="2">
    <conflict type="erroneous gene model prediction">
        <sequence resource="EMBL-CDS" id="CAB71001"/>
    </conflict>
</comment>
<dbReference type="EC" id="3.1.3.24"/>
<dbReference type="EMBL" id="AL132957">
    <property type="protein sequence ID" value="CAB71001.1"/>
    <property type="status" value="ALT_SEQ"/>
    <property type="molecule type" value="Genomic_DNA"/>
</dbReference>
<dbReference type="EMBL" id="CP002686">
    <property type="protein sequence ID" value="AEE79206.1"/>
    <property type="molecule type" value="Genomic_DNA"/>
</dbReference>
<dbReference type="EMBL" id="AF434711">
    <property type="protein sequence ID" value="AAL30747.1"/>
    <property type="molecule type" value="mRNA"/>
</dbReference>
<dbReference type="PIR" id="T47586">
    <property type="entry name" value="T47586"/>
</dbReference>
<dbReference type="RefSeq" id="NP_190995.2">
    <property type="nucleotide sequence ID" value="NM_115287.4"/>
</dbReference>
<dbReference type="SMR" id="Q93WU4"/>
<dbReference type="FunCoup" id="Q93WU4">
    <property type="interactions" value="172"/>
</dbReference>
<dbReference type="STRING" id="3702.Q93WU4"/>
<dbReference type="PaxDb" id="3702-AT3G54270.1"/>
<dbReference type="ProteomicsDB" id="245201"/>
<dbReference type="EnsemblPlants" id="AT3G54270.1">
    <property type="protein sequence ID" value="AT3G54270.1"/>
    <property type="gene ID" value="AT3G54270"/>
</dbReference>
<dbReference type="GeneID" id="824594"/>
<dbReference type="Gramene" id="AT3G54270.1">
    <property type="protein sequence ID" value="AT3G54270.1"/>
    <property type="gene ID" value="AT3G54270"/>
</dbReference>
<dbReference type="KEGG" id="ath:AT3G54270"/>
<dbReference type="Araport" id="AT3G54270"/>
<dbReference type="TAIR" id="AT3G54270"/>
<dbReference type="eggNOG" id="ENOG502S2R4">
    <property type="taxonomic scope" value="Eukaryota"/>
</dbReference>
<dbReference type="HOGENOM" id="CLU_030534_1_0_1"/>
<dbReference type="InParanoid" id="Q93WU4"/>
<dbReference type="OMA" id="DTENFHG"/>
<dbReference type="PhylomeDB" id="Q93WU4"/>
<dbReference type="BioCyc" id="ARA:AT3G54270-MONOMER"/>
<dbReference type="UniPathway" id="UPA00371">
    <property type="reaction ID" value="UER00546"/>
</dbReference>
<dbReference type="PRO" id="PR:Q93WU4"/>
<dbReference type="Proteomes" id="UP000006548">
    <property type="component" value="Chromosome 3"/>
</dbReference>
<dbReference type="ExpressionAtlas" id="Q93WU4">
    <property type="expression patterns" value="baseline and differential"/>
</dbReference>
<dbReference type="GO" id="GO:0000287">
    <property type="term" value="F:magnesium ion binding"/>
    <property type="evidence" value="ECO:0007669"/>
    <property type="project" value="InterPro"/>
</dbReference>
<dbReference type="GO" id="GO:0050307">
    <property type="term" value="F:sucrose-phosphate phosphatase activity"/>
    <property type="evidence" value="ECO:0007669"/>
    <property type="project" value="UniProtKB-EC"/>
</dbReference>
<dbReference type="GO" id="GO:0005986">
    <property type="term" value="P:sucrose biosynthetic process"/>
    <property type="evidence" value="ECO:0007669"/>
    <property type="project" value="UniProtKB-UniPathway"/>
</dbReference>
<dbReference type="Gene3D" id="3.10.450.50">
    <property type="match status" value="1"/>
</dbReference>
<dbReference type="Gene3D" id="3.90.1070.10">
    <property type="match status" value="1"/>
</dbReference>
<dbReference type="Gene3D" id="3.40.50.1000">
    <property type="entry name" value="HAD superfamily/HAD-like"/>
    <property type="match status" value="1"/>
</dbReference>
<dbReference type="InterPro" id="IPR036412">
    <property type="entry name" value="HAD-like_sf"/>
</dbReference>
<dbReference type="InterPro" id="IPR006379">
    <property type="entry name" value="HAD-SF_hydro_IIB"/>
</dbReference>
<dbReference type="InterPro" id="IPR023214">
    <property type="entry name" value="HAD_sf"/>
</dbReference>
<dbReference type="InterPro" id="IPR032710">
    <property type="entry name" value="NTF2-like_dom_sf"/>
</dbReference>
<dbReference type="InterPro" id="IPR006380">
    <property type="entry name" value="SPP-like_dom"/>
</dbReference>
<dbReference type="InterPro" id="IPR013679">
    <property type="entry name" value="SPP_C"/>
</dbReference>
<dbReference type="InterPro" id="IPR051518">
    <property type="entry name" value="Sucrose_Phosphatase"/>
</dbReference>
<dbReference type="InterPro" id="IPR012847">
    <property type="entry name" value="Sucrose_phosphatase_pln/cyn"/>
</dbReference>
<dbReference type="NCBIfam" id="TIGR01484">
    <property type="entry name" value="HAD-SF-IIB"/>
    <property type="match status" value="1"/>
</dbReference>
<dbReference type="NCBIfam" id="TIGR01482">
    <property type="entry name" value="SPP-subfamily"/>
    <property type="match status" value="1"/>
</dbReference>
<dbReference type="NCBIfam" id="TIGR01485">
    <property type="entry name" value="SPP_plant-cyano"/>
    <property type="match status" value="1"/>
</dbReference>
<dbReference type="PANTHER" id="PTHR46521">
    <property type="entry name" value="SUCROSE-PHOSPHATASE 2-RELATED"/>
    <property type="match status" value="1"/>
</dbReference>
<dbReference type="PANTHER" id="PTHR46521:SF8">
    <property type="entry name" value="SUCROSE-PHOSPHATASE 3A-RELATED"/>
    <property type="match status" value="1"/>
</dbReference>
<dbReference type="Pfam" id="PF05116">
    <property type="entry name" value="S6PP"/>
    <property type="match status" value="1"/>
</dbReference>
<dbReference type="Pfam" id="PF08472">
    <property type="entry name" value="S6PP_C"/>
    <property type="match status" value="1"/>
</dbReference>
<dbReference type="SFLD" id="SFLDG01140">
    <property type="entry name" value="C2.B:_Phosphomannomutase_and_P"/>
    <property type="match status" value="1"/>
</dbReference>
<dbReference type="SFLD" id="SFLDF00043">
    <property type="entry name" value="sucrose-phosphatase"/>
    <property type="match status" value="1"/>
</dbReference>
<dbReference type="SUPFAM" id="SSF56784">
    <property type="entry name" value="HAD-like"/>
    <property type="match status" value="1"/>
</dbReference>
<dbReference type="SUPFAM" id="SSF54427">
    <property type="entry name" value="NTF2-like"/>
    <property type="match status" value="1"/>
</dbReference>
<feature type="chain" id="PRO_0000350615" description="Probable sucrose-phosphatase 3a">
    <location>
        <begin position="1"/>
        <end position="425"/>
    </location>
</feature>
<reference key="1">
    <citation type="journal article" date="2000" name="Nature">
        <title>Sequence and analysis of chromosome 3 of the plant Arabidopsis thaliana.</title>
        <authorList>
            <person name="Salanoubat M."/>
            <person name="Lemcke K."/>
            <person name="Rieger M."/>
            <person name="Ansorge W."/>
            <person name="Unseld M."/>
            <person name="Fartmann B."/>
            <person name="Valle G."/>
            <person name="Bloecker H."/>
            <person name="Perez-Alonso M."/>
            <person name="Obermaier B."/>
            <person name="Delseny M."/>
            <person name="Boutry M."/>
            <person name="Grivell L.A."/>
            <person name="Mache R."/>
            <person name="Puigdomenech P."/>
            <person name="De Simone V."/>
            <person name="Choisne N."/>
            <person name="Artiguenave F."/>
            <person name="Robert C."/>
            <person name="Brottier P."/>
            <person name="Wincker P."/>
            <person name="Cattolico L."/>
            <person name="Weissenbach J."/>
            <person name="Saurin W."/>
            <person name="Quetier F."/>
            <person name="Schaefer M."/>
            <person name="Mueller-Auer S."/>
            <person name="Gabel C."/>
            <person name="Fuchs M."/>
            <person name="Benes V."/>
            <person name="Wurmbach E."/>
            <person name="Drzonek H."/>
            <person name="Erfle H."/>
            <person name="Jordan N."/>
            <person name="Bangert S."/>
            <person name="Wiedelmann R."/>
            <person name="Kranz H."/>
            <person name="Voss H."/>
            <person name="Holland R."/>
            <person name="Brandt P."/>
            <person name="Nyakatura G."/>
            <person name="Vezzi A."/>
            <person name="D'Angelo M."/>
            <person name="Pallavicini A."/>
            <person name="Toppo S."/>
            <person name="Simionati B."/>
            <person name="Conrad A."/>
            <person name="Hornischer K."/>
            <person name="Kauer G."/>
            <person name="Loehnert T.-H."/>
            <person name="Nordsiek G."/>
            <person name="Reichelt J."/>
            <person name="Scharfe M."/>
            <person name="Schoen O."/>
            <person name="Bargues M."/>
            <person name="Terol J."/>
            <person name="Climent J."/>
            <person name="Navarro P."/>
            <person name="Collado C."/>
            <person name="Perez-Perez A."/>
            <person name="Ottenwaelder B."/>
            <person name="Duchemin D."/>
            <person name="Cooke R."/>
            <person name="Laudie M."/>
            <person name="Berger-Llauro C."/>
            <person name="Purnelle B."/>
            <person name="Masuy D."/>
            <person name="de Haan M."/>
            <person name="Maarse A.C."/>
            <person name="Alcaraz J.-P."/>
            <person name="Cottet A."/>
            <person name="Casacuberta E."/>
            <person name="Monfort A."/>
            <person name="Argiriou A."/>
            <person name="Flores M."/>
            <person name="Liguori R."/>
            <person name="Vitale D."/>
            <person name="Mannhaupt G."/>
            <person name="Haase D."/>
            <person name="Schoof H."/>
            <person name="Rudd S."/>
            <person name="Zaccaria P."/>
            <person name="Mewes H.-W."/>
            <person name="Mayer K.F.X."/>
            <person name="Kaul S."/>
            <person name="Town C.D."/>
            <person name="Koo H.L."/>
            <person name="Tallon L.J."/>
            <person name="Jenkins J."/>
            <person name="Rooney T."/>
            <person name="Rizzo M."/>
            <person name="Walts A."/>
            <person name="Utterback T."/>
            <person name="Fujii C.Y."/>
            <person name="Shea T.P."/>
            <person name="Creasy T.H."/>
            <person name="Haas B."/>
            <person name="Maiti R."/>
            <person name="Wu D."/>
            <person name="Peterson J."/>
            <person name="Van Aken S."/>
            <person name="Pai G."/>
            <person name="Militscher J."/>
            <person name="Sellers P."/>
            <person name="Gill J.E."/>
            <person name="Feldblyum T.V."/>
            <person name="Preuss D."/>
            <person name="Lin X."/>
            <person name="Nierman W.C."/>
            <person name="Salzberg S.L."/>
            <person name="White O."/>
            <person name="Venter J.C."/>
            <person name="Fraser C.M."/>
            <person name="Kaneko T."/>
            <person name="Nakamura Y."/>
            <person name="Sato S."/>
            <person name="Kato T."/>
            <person name="Asamizu E."/>
            <person name="Sasamoto S."/>
            <person name="Kimura T."/>
            <person name="Idesawa K."/>
            <person name="Kawashima K."/>
            <person name="Kishida Y."/>
            <person name="Kiyokawa C."/>
            <person name="Kohara M."/>
            <person name="Matsumoto M."/>
            <person name="Matsuno A."/>
            <person name="Muraki A."/>
            <person name="Nakayama S."/>
            <person name="Nakazaki N."/>
            <person name="Shinpo S."/>
            <person name="Takeuchi C."/>
            <person name="Wada T."/>
            <person name="Watanabe A."/>
            <person name="Yamada M."/>
            <person name="Yasuda M."/>
            <person name="Tabata S."/>
        </authorList>
    </citation>
    <scope>NUCLEOTIDE SEQUENCE [LARGE SCALE GENOMIC DNA]</scope>
    <source>
        <strain>cv. Columbia</strain>
    </source>
</reference>
<reference key="2">
    <citation type="journal article" date="2017" name="Plant J.">
        <title>Araport11: a complete reannotation of the Arabidopsis thaliana reference genome.</title>
        <authorList>
            <person name="Cheng C.Y."/>
            <person name="Krishnakumar V."/>
            <person name="Chan A.P."/>
            <person name="Thibaud-Nissen F."/>
            <person name="Schobel S."/>
            <person name="Town C.D."/>
        </authorList>
    </citation>
    <scope>GENOME REANNOTATION</scope>
    <source>
        <strain>cv. Columbia</strain>
    </source>
</reference>
<reference key="3">
    <citation type="journal article" date="2000" name="Proc. Natl. Acad. Sci. U.S.A.">
        <title>Purification, molecular cloning, and sequence analysis of sucrose-6F-phosphate phosphohydrolase from plants.</title>
        <authorList>
            <person name="Lunn J.E."/>
            <person name="Ashton A.R."/>
            <person name="Hatch M.D."/>
            <person name="Heldt H.W."/>
        </authorList>
    </citation>
    <scope>NUCLEOTIDE SEQUENCE [MRNA] OF 48-425</scope>
    <source>
        <strain>cv. Columbia</strain>
        <tissue>Seed</tissue>
    </source>
</reference>
<reference key="4">
    <citation type="journal article" date="2003" name="Gene">
        <title>Sucrose-phosphatase gene families in plants.</title>
        <authorList>
            <person name="Lunn J.E."/>
        </authorList>
    </citation>
    <scope>GENE FAMILY</scope>
    <scope>NOMENCLATURE</scope>
</reference>
<organism>
    <name type="scientific">Arabidopsis thaliana</name>
    <name type="common">Mouse-ear cress</name>
    <dbReference type="NCBI Taxonomy" id="3702"/>
    <lineage>
        <taxon>Eukaryota</taxon>
        <taxon>Viridiplantae</taxon>
        <taxon>Streptophyta</taxon>
        <taxon>Embryophyta</taxon>
        <taxon>Tracheophyta</taxon>
        <taxon>Spermatophyta</taxon>
        <taxon>Magnoliopsida</taxon>
        <taxon>eudicotyledons</taxon>
        <taxon>Gunneridae</taxon>
        <taxon>Pentapetalae</taxon>
        <taxon>rosids</taxon>
        <taxon>malvids</taxon>
        <taxon>Brassicales</taxon>
        <taxon>Brassicaceae</taxon>
        <taxon>Camelineae</taxon>
        <taxon>Arabidopsis</taxon>
    </lineage>
</organism>
<gene>
    <name type="primary">SPP3A</name>
    <name type="synonym">SPP3</name>
    <name type="ordered locus">At3g54270</name>
    <name type="ORF">F24B22.230</name>
</gene>
<name>SPP3A_ARATH</name>
<protein>
    <recommendedName>
        <fullName>Probable sucrose-phosphatase 3a</fullName>
        <shortName>AtSPP3a</shortName>
        <ecNumber>3.1.3.24</ecNumber>
    </recommendedName>
</protein>
<accession>Q93WU4</accession>
<accession>Q9M379</accession>
<proteinExistence type="evidence at transcript level"/>
<keyword id="KW-0378">Hydrolase</keyword>
<keyword id="KW-0460">Magnesium</keyword>
<keyword id="KW-1185">Reference proteome</keyword>
<sequence length="425" mass="48644">MDRLEGPPRLILVADLDCTLVDHDDPENNDLLRFNALWEAHYRHDSLLVYCTGRSFSSYSSLRKKRPLLTPDIAVTSVGSEIVYGGGESTVSDVVWTARLDYKWNRDIVVEETLKFPKLEPQPDKSQEEHKVSFFVGREDAVEIMKVLPGILEERGVDVKLVYSNGYAFDVLPRGAGKQGALTYLLDKLDIEGKQPSNTLVCGDSGNDAELFNISDVYGVMVSNSHEELLQWYEENAKDNPKIFHASERCGAGMIEAIQRFNLGPNVSPRDVMDTENFHGESLNPAHEVVQFYLFYERWRCGEVEKSDKYLQNLKSLSSPLGIFVHPSGVEKPIHEWIDEMENLYGDGKEKKFRIWLDNVTSSHISSDTWLAKFVKHELSEGKVRSCSTKVLLSYKEEKQRLTWMHIHQSWLDESSSDDQEKWIF</sequence>